<dbReference type="EMBL" id="U19943">
    <property type="protein sequence ID" value="AAA79924.1"/>
    <property type="molecule type" value="mRNA"/>
</dbReference>
<dbReference type="PIR" id="S56676">
    <property type="entry name" value="S56676"/>
</dbReference>
<comment type="tissue specificity">
    <text>In developing fruit, and to a lesser extent in vegetative tissues.</text>
</comment>
<comment type="developmental stage">
    <text>Expression of the protein is enhanced in a ripening fruit.</text>
</comment>
<organism>
    <name type="scientific">Fragaria ananassa</name>
    <name type="common">Strawberry</name>
    <name type="synonym">Fragaria chiloensis x Fragaria virginiana</name>
    <dbReference type="NCBI Taxonomy" id="3747"/>
    <lineage>
        <taxon>Eukaryota</taxon>
        <taxon>Viridiplantae</taxon>
        <taxon>Streptophyta</taxon>
        <taxon>Embryophyta</taxon>
        <taxon>Tracheophyta</taxon>
        <taxon>Spermatophyta</taxon>
        <taxon>Magnoliopsida</taxon>
        <taxon>eudicotyledons</taxon>
        <taxon>Gunneridae</taxon>
        <taxon>Pentapetalae</taxon>
        <taxon>rosids</taxon>
        <taxon>fabids</taxon>
        <taxon>Rosales</taxon>
        <taxon>Rosaceae</taxon>
        <taxon>Rosoideae</taxon>
        <taxon>Potentilleae</taxon>
        <taxon>Fragariinae</taxon>
        <taxon>Fragaria</taxon>
    </lineage>
</organism>
<accession>P51072</accession>
<sequence length="27" mass="3272">LQLSYRPRVMIMAVMFVFCINKGYDIY</sequence>
<proteinExistence type="evidence at transcript level"/>
<protein>
    <recommendedName>
        <fullName>Uncharacterized protein RJ21</fullName>
    </recommendedName>
</protein>
<feature type="chain" id="PRO_0000097354" description="Uncharacterized protein RJ21">
    <location>
        <begin position="1" status="less than"/>
        <end position="27"/>
    </location>
</feature>
<feature type="non-terminal residue">
    <location>
        <position position="1"/>
    </location>
</feature>
<name>RJ21_FRAAN</name>
<reference key="1">
    <citation type="journal article" date="1995" name="Plant Mol. Biol.">
        <title>Identification of mRNAs with enhanced expression in ripening strawberry fruit using polymerase chain reaction differential display.</title>
        <authorList>
            <person name="Wilkinson J.Q."/>
            <person name="Lanahan M.B."/>
            <person name="Conner T.W."/>
            <person name="Klee H.J."/>
        </authorList>
    </citation>
    <scope>NUCLEOTIDE SEQUENCE [MRNA]</scope>
    <source>
        <strain>cv. Pajaro</strain>
        <tissue>Fruit</tissue>
    </source>
</reference>